<sequence length="586" mass="64625">MVSGKIVKIAGPVVVAEGMKGAQMYEVVKVGNEGLTGEIIQLESDKAVIQVYEETAGIVPGEPVEGTGAPLSAELGPGMLKAMYDGIQRPLTAIEDATKSIYIPRGVSVPSISREAKWDFTPTVNVGDKVEAGDIIGTVPETKSIVHKIMIPNGISGTIKEIKSGSFTVVEPIAIVETENGEEKEIIMMQKWPVRNPRPYKEKLPPEIPLVTGQRLEDTFFGLAKGGASAIPGPFGSGKTVTQHQLAKWSDADIVVYIGCGERGNEMTEVIEEFPHLDDLKTGNKLMDRTVLIANTSNMPVAAREASVYTGITIAEYFRDMGYGVLLTADSTSRWAEAMREISGRLEEMPGEEGYPAYLSSRLAQFYERAGRVACMGHDEKQGFVCIVGAVSPPGGDFSEPVTSNTLRIVKVFWALDANLARRRHFPAINWLQSYSLYLDDIEDWWKENTAEDWREIRDEAMNLLQKEAELQEIVQLVGPDALPDKERVILEVSRMLREDFLQQDAFSDIDSYCSPMKQYTMLKTIMTFYSKAILAVEKGADPADIAKVSVKQDVAKMKYTPEEEFLNKLAPAIVEKISKELDALV</sequence>
<feature type="chain" id="PRO_0000322472" description="A-type ATP synthase subunit A">
    <location>
        <begin position="1"/>
        <end position="586"/>
    </location>
</feature>
<feature type="binding site" evidence="1">
    <location>
        <begin position="233"/>
        <end position="240"/>
    </location>
    <ligand>
        <name>ATP</name>
        <dbReference type="ChEBI" id="CHEBI:30616"/>
    </ligand>
</feature>
<proteinExistence type="inferred from homology"/>
<organism>
    <name type="scientific">Methanococcus aeolicus (strain ATCC BAA-1280 / DSM 17508 / OCM 812 / Nankai-3)</name>
    <dbReference type="NCBI Taxonomy" id="419665"/>
    <lineage>
        <taxon>Archaea</taxon>
        <taxon>Methanobacteriati</taxon>
        <taxon>Methanobacteriota</taxon>
        <taxon>Methanomada group</taxon>
        <taxon>Methanococci</taxon>
        <taxon>Methanococcales</taxon>
        <taxon>Methanococcaceae</taxon>
        <taxon>Methanococcus</taxon>
    </lineage>
</organism>
<gene>
    <name evidence="1" type="primary">atpA</name>
    <name type="ordered locus">Maeo_0065</name>
</gene>
<evidence type="ECO:0000255" key="1">
    <source>
        <dbReference type="HAMAP-Rule" id="MF_00309"/>
    </source>
</evidence>
<protein>
    <recommendedName>
        <fullName evidence="1">A-type ATP synthase subunit A</fullName>
        <ecNumber evidence="1">7.1.2.2</ecNumber>
    </recommendedName>
</protein>
<dbReference type="EC" id="7.1.2.2" evidence="1"/>
<dbReference type="EMBL" id="CP000743">
    <property type="protein sequence ID" value="ABR55657.1"/>
    <property type="molecule type" value="Genomic_DNA"/>
</dbReference>
<dbReference type="RefSeq" id="WP_011972789.1">
    <property type="nucleotide sequence ID" value="NC_009635.1"/>
</dbReference>
<dbReference type="SMR" id="A6UT35"/>
<dbReference type="STRING" id="419665.Maeo_0065"/>
<dbReference type="GeneID" id="5326818"/>
<dbReference type="KEGG" id="mae:Maeo_0065"/>
<dbReference type="eggNOG" id="arCOG00868">
    <property type="taxonomic scope" value="Archaea"/>
</dbReference>
<dbReference type="HOGENOM" id="CLU_008162_3_1_2"/>
<dbReference type="OrthoDB" id="115235at2157"/>
<dbReference type="Proteomes" id="UP000001106">
    <property type="component" value="Chromosome"/>
</dbReference>
<dbReference type="GO" id="GO:0005886">
    <property type="term" value="C:plasma membrane"/>
    <property type="evidence" value="ECO:0007669"/>
    <property type="project" value="UniProtKB-SubCell"/>
</dbReference>
<dbReference type="GO" id="GO:0033178">
    <property type="term" value="C:proton-transporting two-sector ATPase complex, catalytic domain"/>
    <property type="evidence" value="ECO:0007669"/>
    <property type="project" value="InterPro"/>
</dbReference>
<dbReference type="GO" id="GO:0005524">
    <property type="term" value="F:ATP binding"/>
    <property type="evidence" value="ECO:0007669"/>
    <property type="project" value="UniProtKB-UniRule"/>
</dbReference>
<dbReference type="GO" id="GO:0046933">
    <property type="term" value="F:proton-transporting ATP synthase activity, rotational mechanism"/>
    <property type="evidence" value="ECO:0007669"/>
    <property type="project" value="UniProtKB-UniRule"/>
</dbReference>
<dbReference type="GO" id="GO:0046961">
    <property type="term" value="F:proton-transporting ATPase activity, rotational mechanism"/>
    <property type="evidence" value="ECO:0007669"/>
    <property type="project" value="InterPro"/>
</dbReference>
<dbReference type="GO" id="GO:0042777">
    <property type="term" value="P:proton motive force-driven plasma membrane ATP synthesis"/>
    <property type="evidence" value="ECO:0007669"/>
    <property type="project" value="UniProtKB-UniRule"/>
</dbReference>
<dbReference type="CDD" id="cd18111">
    <property type="entry name" value="ATP-synt_V_A-type_alpha_C"/>
    <property type="match status" value="1"/>
</dbReference>
<dbReference type="CDD" id="cd18119">
    <property type="entry name" value="ATP-synt_V_A-type_alpha_N"/>
    <property type="match status" value="1"/>
</dbReference>
<dbReference type="CDD" id="cd01134">
    <property type="entry name" value="V_A-ATPase_A"/>
    <property type="match status" value="1"/>
</dbReference>
<dbReference type="FunFam" id="1.10.1140.10:FF:000002">
    <property type="entry name" value="V-type proton ATPase catalytic subunit A"/>
    <property type="match status" value="1"/>
</dbReference>
<dbReference type="FunFam" id="2.40.30.20:FF:000002">
    <property type="entry name" value="V-type proton ATPase catalytic subunit A"/>
    <property type="match status" value="1"/>
</dbReference>
<dbReference type="FunFam" id="2.40.50.100:FF:000008">
    <property type="entry name" value="V-type proton ATPase catalytic subunit A"/>
    <property type="match status" value="1"/>
</dbReference>
<dbReference type="Gene3D" id="2.40.30.20">
    <property type="match status" value="1"/>
</dbReference>
<dbReference type="Gene3D" id="2.40.50.100">
    <property type="match status" value="1"/>
</dbReference>
<dbReference type="Gene3D" id="1.10.1140.10">
    <property type="entry name" value="Bovine Mitochondrial F1-atpase, Atp Synthase Beta Chain, Chain D, domain 3"/>
    <property type="match status" value="1"/>
</dbReference>
<dbReference type="Gene3D" id="3.40.50.300">
    <property type="entry name" value="P-loop containing nucleotide triphosphate hydrolases"/>
    <property type="match status" value="1"/>
</dbReference>
<dbReference type="HAMAP" id="MF_00309">
    <property type="entry name" value="ATP_synth_A_arch"/>
    <property type="match status" value="1"/>
</dbReference>
<dbReference type="InterPro" id="IPR055190">
    <property type="entry name" value="ATP-synt_VA_C"/>
</dbReference>
<dbReference type="InterPro" id="IPR031686">
    <property type="entry name" value="ATP-synth_a_Xtn"/>
</dbReference>
<dbReference type="InterPro" id="IPR023366">
    <property type="entry name" value="ATP_synth_asu-like_sf"/>
</dbReference>
<dbReference type="InterPro" id="IPR005726">
    <property type="entry name" value="ATP_synth_asu_arc"/>
</dbReference>
<dbReference type="InterPro" id="IPR020003">
    <property type="entry name" value="ATPase_a/bsu_AS"/>
</dbReference>
<dbReference type="InterPro" id="IPR004100">
    <property type="entry name" value="ATPase_F1/V1/A1_a/bsu_N"/>
</dbReference>
<dbReference type="InterPro" id="IPR036121">
    <property type="entry name" value="ATPase_F1/V1/A1_a/bsu_N_sf"/>
</dbReference>
<dbReference type="InterPro" id="IPR000194">
    <property type="entry name" value="ATPase_F1/V1/A1_a/bsu_nucl-bd"/>
</dbReference>
<dbReference type="InterPro" id="IPR024034">
    <property type="entry name" value="ATPase_F1/V1_b/a_C"/>
</dbReference>
<dbReference type="InterPro" id="IPR027417">
    <property type="entry name" value="P-loop_NTPase"/>
</dbReference>
<dbReference type="InterPro" id="IPR011053">
    <property type="entry name" value="Single_hybrid_motif"/>
</dbReference>
<dbReference type="InterPro" id="IPR022878">
    <property type="entry name" value="V-ATPase_asu"/>
</dbReference>
<dbReference type="NCBIfam" id="TIGR01043">
    <property type="entry name" value="ATP_syn_A_arch"/>
    <property type="match status" value="1"/>
</dbReference>
<dbReference type="NCBIfam" id="NF003220">
    <property type="entry name" value="PRK04192.1"/>
    <property type="match status" value="1"/>
</dbReference>
<dbReference type="PANTHER" id="PTHR43607:SF1">
    <property type="entry name" value="H(+)-TRANSPORTING TWO-SECTOR ATPASE"/>
    <property type="match status" value="1"/>
</dbReference>
<dbReference type="PANTHER" id="PTHR43607">
    <property type="entry name" value="V-TYPE PROTON ATPASE CATALYTIC SUBUNIT A"/>
    <property type="match status" value="1"/>
</dbReference>
<dbReference type="Pfam" id="PF00006">
    <property type="entry name" value="ATP-synt_ab"/>
    <property type="match status" value="1"/>
</dbReference>
<dbReference type="Pfam" id="PF02874">
    <property type="entry name" value="ATP-synt_ab_N"/>
    <property type="match status" value="1"/>
</dbReference>
<dbReference type="Pfam" id="PF16886">
    <property type="entry name" value="ATP-synt_ab_Xtn"/>
    <property type="match status" value="1"/>
</dbReference>
<dbReference type="Pfam" id="PF22919">
    <property type="entry name" value="ATP-synt_VA_C"/>
    <property type="match status" value="1"/>
</dbReference>
<dbReference type="SUPFAM" id="SSF47917">
    <property type="entry name" value="C-terminal domain of alpha and beta subunits of F1 ATP synthase"/>
    <property type="match status" value="1"/>
</dbReference>
<dbReference type="SUPFAM" id="SSF50615">
    <property type="entry name" value="N-terminal domain of alpha and beta subunits of F1 ATP synthase"/>
    <property type="match status" value="1"/>
</dbReference>
<dbReference type="SUPFAM" id="SSF52540">
    <property type="entry name" value="P-loop containing nucleoside triphosphate hydrolases"/>
    <property type="match status" value="1"/>
</dbReference>
<dbReference type="SUPFAM" id="SSF51230">
    <property type="entry name" value="Single hybrid motif"/>
    <property type="match status" value="1"/>
</dbReference>
<dbReference type="PROSITE" id="PS00152">
    <property type="entry name" value="ATPASE_ALPHA_BETA"/>
    <property type="match status" value="1"/>
</dbReference>
<name>AATA_META3</name>
<accession>A6UT35</accession>
<keyword id="KW-0066">ATP synthesis</keyword>
<keyword id="KW-0067">ATP-binding</keyword>
<keyword id="KW-1003">Cell membrane</keyword>
<keyword id="KW-0375">Hydrogen ion transport</keyword>
<keyword id="KW-0406">Ion transport</keyword>
<keyword id="KW-0472">Membrane</keyword>
<keyword id="KW-0547">Nucleotide-binding</keyword>
<keyword id="KW-1278">Translocase</keyword>
<keyword id="KW-0813">Transport</keyword>
<reference key="1">
    <citation type="submission" date="2007-06" db="EMBL/GenBank/DDBJ databases">
        <title>Complete sequence of Methanococcus aeolicus Nankai-3.</title>
        <authorList>
            <consortium name="US DOE Joint Genome Institute"/>
            <person name="Copeland A."/>
            <person name="Lucas S."/>
            <person name="Lapidus A."/>
            <person name="Barry K."/>
            <person name="Glavina del Rio T."/>
            <person name="Dalin E."/>
            <person name="Tice H."/>
            <person name="Pitluck S."/>
            <person name="Chain P."/>
            <person name="Malfatti S."/>
            <person name="Shin M."/>
            <person name="Vergez L."/>
            <person name="Schmutz J."/>
            <person name="Larimer F."/>
            <person name="Land M."/>
            <person name="Hauser L."/>
            <person name="Kyrpides N."/>
            <person name="Lykidis A."/>
            <person name="Sieprawska-Lupa M."/>
            <person name="Whitman W.B."/>
            <person name="Richardson P."/>
        </authorList>
    </citation>
    <scope>NUCLEOTIDE SEQUENCE [LARGE SCALE GENOMIC DNA]</scope>
    <source>
        <strain>ATCC BAA-1280 / DSM 17508 / OCM 812 / Nankai-3</strain>
    </source>
</reference>
<comment type="function">
    <text evidence="1">Component of the A-type ATP synthase that produces ATP from ADP in the presence of a proton gradient across the membrane. The A chain is the catalytic subunit.</text>
</comment>
<comment type="catalytic activity">
    <reaction evidence="1">
        <text>ATP + H2O + 4 H(+)(in) = ADP + phosphate + 5 H(+)(out)</text>
        <dbReference type="Rhea" id="RHEA:57720"/>
        <dbReference type="ChEBI" id="CHEBI:15377"/>
        <dbReference type="ChEBI" id="CHEBI:15378"/>
        <dbReference type="ChEBI" id="CHEBI:30616"/>
        <dbReference type="ChEBI" id="CHEBI:43474"/>
        <dbReference type="ChEBI" id="CHEBI:456216"/>
        <dbReference type="EC" id="7.1.2.2"/>
    </reaction>
</comment>
<comment type="subunit">
    <text evidence="1">Has multiple subunits with at least A(3), B(3), C, D, E, F, H, I and proteolipid K(x).</text>
</comment>
<comment type="subcellular location">
    <subcellularLocation>
        <location evidence="1">Cell membrane</location>
        <topology evidence="1">Peripheral membrane protein</topology>
    </subcellularLocation>
</comment>
<comment type="similarity">
    <text evidence="1">Belongs to the ATPase alpha/beta chains family.</text>
</comment>